<reference key="1">
    <citation type="journal article" date="2007" name="J. Bacteriol.">
        <title>The complete genome sequence of Campylobacter jejuni strain 81116 (NCTC11828).</title>
        <authorList>
            <person name="Pearson B.M."/>
            <person name="Gaskin D.J.H."/>
            <person name="Segers R.P.A.M."/>
            <person name="Wells J.M."/>
            <person name="Nuijten P.J.M."/>
            <person name="van Vliet A.H.M."/>
        </authorList>
    </citation>
    <scope>NUCLEOTIDE SEQUENCE [LARGE SCALE GENOMIC DNA]</scope>
    <source>
        <strain>81116 / NCTC 11828</strain>
    </source>
</reference>
<feature type="chain" id="PRO_1000072015" description="Probable GTP-binding protein EngB">
    <location>
        <begin position="1"/>
        <end position="198"/>
    </location>
</feature>
<feature type="domain" description="EngB-type G" evidence="1">
    <location>
        <begin position="21"/>
        <end position="195"/>
    </location>
</feature>
<feature type="binding site" evidence="1">
    <location>
        <begin position="29"/>
        <end position="36"/>
    </location>
    <ligand>
        <name>GTP</name>
        <dbReference type="ChEBI" id="CHEBI:37565"/>
    </ligand>
</feature>
<feature type="binding site" evidence="1">
    <location>
        <position position="36"/>
    </location>
    <ligand>
        <name>Mg(2+)</name>
        <dbReference type="ChEBI" id="CHEBI:18420"/>
    </ligand>
</feature>
<feature type="binding site" evidence="1">
    <location>
        <begin position="56"/>
        <end position="60"/>
    </location>
    <ligand>
        <name>GTP</name>
        <dbReference type="ChEBI" id="CHEBI:37565"/>
    </ligand>
</feature>
<feature type="binding site" evidence="1">
    <location>
        <position position="58"/>
    </location>
    <ligand>
        <name>Mg(2+)</name>
        <dbReference type="ChEBI" id="CHEBI:18420"/>
    </ligand>
</feature>
<feature type="binding site" evidence="1">
    <location>
        <begin position="81"/>
        <end position="84"/>
    </location>
    <ligand>
        <name>GTP</name>
        <dbReference type="ChEBI" id="CHEBI:37565"/>
    </ligand>
</feature>
<feature type="binding site" evidence="1">
    <location>
        <begin position="151"/>
        <end position="154"/>
    </location>
    <ligand>
        <name>GTP</name>
        <dbReference type="ChEBI" id="CHEBI:37565"/>
    </ligand>
</feature>
<feature type="binding site" evidence="1">
    <location>
        <begin position="174"/>
        <end position="176"/>
    </location>
    <ligand>
        <name>GTP</name>
        <dbReference type="ChEBI" id="CHEBI:37565"/>
    </ligand>
</feature>
<evidence type="ECO:0000255" key="1">
    <source>
        <dbReference type="HAMAP-Rule" id="MF_00321"/>
    </source>
</evidence>
<gene>
    <name evidence="1" type="primary">engB</name>
    <name type="ordered locus">C8J_0609</name>
</gene>
<proteinExistence type="inferred from homology"/>
<name>ENGB_CAMJ8</name>
<comment type="function">
    <text evidence="1">Necessary for normal cell division and for the maintenance of normal septation.</text>
</comment>
<comment type="cofactor">
    <cofactor evidence="1">
        <name>Mg(2+)</name>
        <dbReference type="ChEBI" id="CHEBI:18420"/>
    </cofactor>
</comment>
<comment type="similarity">
    <text evidence="1">Belongs to the TRAFAC class TrmE-Era-EngA-EngB-Septin-like GTPase superfamily. EngB GTPase family.</text>
</comment>
<organism>
    <name type="scientific">Campylobacter jejuni subsp. jejuni serotype O:6 (strain 81116 / NCTC 11828)</name>
    <dbReference type="NCBI Taxonomy" id="407148"/>
    <lineage>
        <taxon>Bacteria</taxon>
        <taxon>Pseudomonadati</taxon>
        <taxon>Campylobacterota</taxon>
        <taxon>Epsilonproteobacteria</taxon>
        <taxon>Campylobacterales</taxon>
        <taxon>Campylobacteraceae</taxon>
        <taxon>Campylobacter</taxon>
    </lineage>
</organism>
<accession>A8FL71</accession>
<sequence length="198" mass="22678">MIISAKFITSLVKFDENLSSNFSEVAFLGRSNVGKSSLINSLCKQKNLAKSSATPGKTQLINFFEVTCKRNEEKFNINFIDLPGFGYAKVSKNLKEIWNQNLDEFLKLRTSIKLFIHLIDSRHTHLEIDVNLNDYLKRFLRPDQKILKVFTKCDKLNQSEKAKLKNEFKDSILVSNLNKFGLDSLEDIIIDQTLGLGK</sequence>
<protein>
    <recommendedName>
        <fullName evidence="1">Probable GTP-binding protein EngB</fullName>
    </recommendedName>
</protein>
<dbReference type="EMBL" id="CP000814">
    <property type="protein sequence ID" value="ABV52208.1"/>
    <property type="molecule type" value="Genomic_DNA"/>
</dbReference>
<dbReference type="SMR" id="A8FL71"/>
<dbReference type="KEGG" id="cju:C8J_0609"/>
<dbReference type="HOGENOM" id="CLU_033732_3_2_7"/>
<dbReference type="GO" id="GO:0005829">
    <property type="term" value="C:cytosol"/>
    <property type="evidence" value="ECO:0007669"/>
    <property type="project" value="TreeGrafter"/>
</dbReference>
<dbReference type="GO" id="GO:0005525">
    <property type="term" value="F:GTP binding"/>
    <property type="evidence" value="ECO:0007669"/>
    <property type="project" value="UniProtKB-UniRule"/>
</dbReference>
<dbReference type="GO" id="GO:0046872">
    <property type="term" value="F:metal ion binding"/>
    <property type="evidence" value="ECO:0007669"/>
    <property type="project" value="UniProtKB-KW"/>
</dbReference>
<dbReference type="GO" id="GO:0000917">
    <property type="term" value="P:division septum assembly"/>
    <property type="evidence" value="ECO:0007669"/>
    <property type="project" value="UniProtKB-KW"/>
</dbReference>
<dbReference type="CDD" id="cd01876">
    <property type="entry name" value="YihA_EngB"/>
    <property type="match status" value="1"/>
</dbReference>
<dbReference type="Gene3D" id="3.40.50.300">
    <property type="entry name" value="P-loop containing nucleotide triphosphate hydrolases"/>
    <property type="match status" value="1"/>
</dbReference>
<dbReference type="HAMAP" id="MF_00321">
    <property type="entry name" value="GTPase_EngB"/>
    <property type="match status" value="1"/>
</dbReference>
<dbReference type="InterPro" id="IPR030393">
    <property type="entry name" value="G_ENGB_dom"/>
</dbReference>
<dbReference type="InterPro" id="IPR006073">
    <property type="entry name" value="GTP-bd"/>
</dbReference>
<dbReference type="InterPro" id="IPR019987">
    <property type="entry name" value="GTP-bd_ribosome_bio_YsxC"/>
</dbReference>
<dbReference type="InterPro" id="IPR027417">
    <property type="entry name" value="P-loop_NTPase"/>
</dbReference>
<dbReference type="InterPro" id="IPR005225">
    <property type="entry name" value="Small_GTP-bd"/>
</dbReference>
<dbReference type="NCBIfam" id="TIGR03598">
    <property type="entry name" value="GTPase_YsxC"/>
    <property type="match status" value="1"/>
</dbReference>
<dbReference type="NCBIfam" id="TIGR00231">
    <property type="entry name" value="small_GTP"/>
    <property type="match status" value="1"/>
</dbReference>
<dbReference type="PANTHER" id="PTHR11649:SF13">
    <property type="entry name" value="ENGB-TYPE G DOMAIN-CONTAINING PROTEIN"/>
    <property type="match status" value="1"/>
</dbReference>
<dbReference type="PANTHER" id="PTHR11649">
    <property type="entry name" value="MSS1/TRME-RELATED GTP-BINDING PROTEIN"/>
    <property type="match status" value="1"/>
</dbReference>
<dbReference type="Pfam" id="PF01926">
    <property type="entry name" value="MMR_HSR1"/>
    <property type="match status" value="1"/>
</dbReference>
<dbReference type="SUPFAM" id="SSF52540">
    <property type="entry name" value="P-loop containing nucleoside triphosphate hydrolases"/>
    <property type="match status" value="1"/>
</dbReference>
<dbReference type="PROSITE" id="PS51706">
    <property type="entry name" value="G_ENGB"/>
    <property type="match status" value="1"/>
</dbReference>
<keyword id="KW-0131">Cell cycle</keyword>
<keyword id="KW-0132">Cell division</keyword>
<keyword id="KW-0342">GTP-binding</keyword>
<keyword id="KW-0460">Magnesium</keyword>
<keyword id="KW-0479">Metal-binding</keyword>
<keyword id="KW-0547">Nucleotide-binding</keyword>
<keyword id="KW-0717">Septation</keyword>